<evidence type="ECO:0000255" key="1"/>
<evidence type="ECO:0000255" key="2">
    <source>
        <dbReference type="PROSITE-ProRule" id="PRU00981"/>
    </source>
</evidence>
<evidence type="ECO:0000256" key="3">
    <source>
        <dbReference type="SAM" id="MobiDB-lite"/>
    </source>
</evidence>
<evidence type="ECO:0000305" key="4"/>
<sequence length="199" mass="21978">MKSLTAVCQTGASGMPALNASGRIQRHPTHRGDGENAEMKMYLSKLKDLVPFMPKNRKLTKLEIIQHVIDYICDLQTELETHPEMGNFDAAAALTAVNGLHEDEDSDMEDADAEAEAEVDPDILAQRLNAEQPAKVSSPAARLPLTDRQTPNTLVAPAHPQQHQQQQQLQLQQQQLQSQQQLSNSLATPQNAEKDSRQS</sequence>
<name>EMC_DROME</name>
<comment type="function">
    <text>Participates in sensory organ patterning by antagonizing the neurogenic activity of the Achaete-scute complex (AS-C). It lacks a basic DNA-binding domain but is able to form heterodimers with other HLH proteins, thereby inhibiting DNA binding. May sequester proneural proteins in complexes inefficient for DNA interaction. EMC also affects vein differentiation. Inhibits the activity of AS-C proteins by forming an non-DNA binding heterodimer.</text>
</comment>
<comment type="subunit">
    <text>Heterodimer with other HLH proteins.</text>
</comment>
<comment type="interaction">
    <interactant intactId="EBI-105737">
        <id>P18491</id>
    </interactant>
    <interactant intactId="EBI-174136">
        <id>P10084</id>
        <label>sc</label>
    </interactant>
    <organismsDiffer>false</organismsDiffer>
    <experiments>4</experiments>
</comment>
<comment type="subcellular location">
    <subcellularLocation>
        <location>Nucleus</location>
    </subcellularLocation>
</comment>
<feature type="chain" id="PRO_0000127169" description="Protein extra-macrochaetae">
    <location>
        <begin position="1"/>
        <end position="199"/>
    </location>
</feature>
<feature type="domain" description="bHLH" evidence="2">
    <location>
        <begin position="23"/>
        <end position="75"/>
    </location>
</feature>
<feature type="region of interest" description="Disordered" evidence="3">
    <location>
        <begin position="127"/>
        <end position="199"/>
    </location>
</feature>
<feature type="compositionally biased region" description="Low complexity" evidence="3">
    <location>
        <begin position="161"/>
        <end position="182"/>
    </location>
</feature>
<feature type="modified residue" description="Phosphoserine" evidence="1">
    <location>
        <position position="106"/>
    </location>
</feature>
<feature type="sequence conflict" description="In Ref. 1; AAA28510/AAA28509." evidence="4" ref="1">
    <original>I</original>
    <variation>V</variation>
    <location>
        <position position="123"/>
    </location>
</feature>
<accession>P18491</accession>
<accession>Q9W0N0</accession>
<protein>
    <recommendedName>
        <fullName>Protein extra-macrochaetae</fullName>
    </recommendedName>
</protein>
<dbReference type="EMBL" id="M31900">
    <property type="protein sequence ID" value="AAA28510.1"/>
    <property type="molecule type" value="Genomic_DNA"/>
</dbReference>
<dbReference type="EMBL" id="M31901">
    <property type="protein sequence ID" value="AAA28510.1"/>
    <property type="status" value="JOINED"/>
    <property type="molecule type" value="Genomic_DNA"/>
</dbReference>
<dbReference type="EMBL" id="M31902">
    <property type="protein sequence ID" value="AAA28509.1"/>
    <property type="molecule type" value="mRNA"/>
</dbReference>
<dbReference type="EMBL" id="M32637">
    <property type="protein sequence ID" value="AAA28511.1"/>
    <property type="molecule type" value="Genomic_DNA"/>
</dbReference>
<dbReference type="EMBL" id="M32636">
    <property type="protein sequence ID" value="AAA28511.1"/>
    <property type="status" value="JOINED"/>
    <property type="molecule type" value="Genomic_DNA"/>
</dbReference>
<dbReference type="EMBL" id="AE014296">
    <property type="protein sequence ID" value="AAF47413.2"/>
    <property type="molecule type" value="Genomic_DNA"/>
</dbReference>
<dbReference type="EMBL" id="AY069405">
    <property type="protein sequence ID" value="AAL39550.1"/>
    <property type="molecule type" value="mRNA"/>
</dbReference>
<dbReference type="PIR" id="A34688">
    <property type="entry name" value="A34688"/>
</dbReference>
<dbReference type="PIR" id="A34689">
    <property type="entry name" value="A34689"/>
</dbReference>
<dbReference type="RefSeq" id="NP_523876.2">
    <property type="nucleotide sequence ID" value="NM_079152.4"/>
</dbReference>
<dbReference type="SMR" id="P18491"/>
<dbReference type="BioGRID" id="63646">
    <property type="interactions" value="30"/>
</dbReference>
<dbReference type="DIP" id="DIP-73N"/>
<dbReference type="FunCoup" id="P18491">
    <property type="interactions" value="357"/>
</dbReference>
<dbReference type="IntAct" id="P18491">
    <property type="interactions" value="17"/>
</dbReference>
<dbReference type="STRING" id="7227.FBpp0072477"/>
<dbReference type="PaxDb" id="7227-FBpp0072477"/>
<dbReference type="EnsemblMetazoa" id="FBtr0072578">
    <property type="protein sequence ID" value="FBpp0072477"/>
    <property type="gene ID" value="FBgn0000575"/>
</dbReference>
<dbReference type="GeneID" id="38091"/>
<dbReference type="KEGG" id="dme:Dmel_CG1007"/>
<dbReference type="AGR" id="FB:FBgn0000575"/>
<dbReference type="CTD" id="38091"/>
<dbReference type="FlyBase" id="FBgn0000575">
    <property type="gene designation" value="emc"/>
</dbReference>
<dbReference type="VEuPathDB" id="VectorBase:FBgn0000575"/>
<dbReference type="eggNOG" id="ENOG502RZP5">
    <property type="taxonomic scope" value="Eukaryota"/>
</dbReference>
<dbReference type="GeneTree" id="ENSGT00940000169907"/>
<dbReference type="HOGENOM" id="CLU_115564_0_0_1"/>
<dbReference type="InParanoid" id="P18491"/>
<dbReference type="OMA" id="IQRHPTH"/>
<dbReference type="OrthoDB" id="10047910at2759"/>
<dbReference type="PhylomeDB" id="P18491"/>
<dbReference type="Reactome" id="R-DME-2559585">
    <property type="pathway name" value="Oncogene Induced Senescence"/>
</dbReference>
<dbReference type="SignaLink" id="P18491"/>
<dbReference type="BioGRID-ORCS" id="38091">
    <property type="hits" value="1 hit in 3 CRISPR screens"/>
</dbReference>
<dbReference type="GenomeRNAi" id="38091"/>
<dbReference type="PRO" id="PR:P18491"/>
<dbReference type="Proteomes" id="UP000000803">
    <property type="component" value="Chromosome 3L"/>
</dbReference>
<dbReference type="Bgee" id="FBgn0000575">
    <property type="expression patterns" value="Expressed in adult oenocyte (Drosophila) in dorsal vessel heart and 329 other cell types or tissues"/>
</dbReference>
<dbReference type="GO" id="GO:0005737">
    <property type="term" value="C:cytoplasm"/>
    <property type="evidence" value="ECO:0007669"/>
    <property type="project" value="InterPro"/>
</dbReference>
<dbReference type="GO" id="GO:0005654">
    <property type="term" value="C:nucleoplasm"/>
    <property type="evidence" value="ECO:0007005"/>
    <property type="project" value="FlyBase"/>
</dbReference>
<dbReference type="GO" id="GO:0005634">
    <property type="term" value="C:nucleus"/>
    <property type="evidence" value="ECO:0000314"/>
    <property type="project" value="FlyBase"/>
</dbReference>
<dbReference type="GO" id="GO:0046983">
    <property type="term" value="F:protein dimerization activity"/>
    <property type="evidence" value="ECO:0007669"/>
    <property type="project" value="InterPro"/>
</dbReference>
<dbReference type="GO" id="GO:0003714">
    <property type="term" value="F:transcription corepressor activity"/>
    <property type="evidence" value="ECO:0000314"/>
    <property type="project" value="FlyBase"/>
</dbReference>
<dbReference type="GO" id="GO:0008407">
    <property type="term" value="P:chaeta morphogenesis"/>
    <property type="evidence" value="ECO:0000304"/>
    <property type="project" value="FlyBase"/>
</dbReference>
<dbReference type="GO" id="GO:0030381">
    <property type="term" value="P:chorion-containing eggshell pattern formation"/>
    <property type="evidence" value="ECO:0000315"/>
    <property type="project" value="FlyBase"/>
</dbReference>
<dbReference type="GO" id="GO:0042675">
    <property type="term" value="P:compound eye cone cell differentiation"/>
    <property type="evidence" value="ECO:0000315"/>
    <property type="project" value="FlyBase"/>
</dbReference>
<dbReference type="GO" id="GO:0007368">
    <property type="term" value="P:determination of left/right symmetry"/>
    <property type="evidence" value="ECO:0000315"/>
    <property type="project" value="FlyBase"/>
</dbReference>
<dbReference type="GO" id="GO:0046843">
    <property type="term" value="P:dorsal appendage formation"/>
    <property type="evidence" value="ECO:0000315"/>
    <property type="project" value="FlyBase"/>
</dbReference>
<dbReference type="GO" id="GO:0007391">
    <property type="term" value="P:dorsal closure"/>
    <property type="evidence" value="ECO:0000315"/>
    <property type="project" value="FlyBase"/>
</dbReference>
<dbReference type="GO" id="GO:0008258">
    <property type="term" value="P:head involution"/>
    <property type="evidence" value="ECO:0000315"/>
    <property type="project" value="FlyBase"/>
</dbReference>
<dbReference type="GO" id="GO:0061525">
    <property type="term" value="P:hindgut development"/>
    <property type="evidence" value="ECO:0000315"/>
    <property type="project" value="FlyBase"/>
</dbReference>
<dbReference type="GO" id="GO:0007476">
    <property type="term" value="P:imaginal disc-derived wing morphogenesis"/>
    <property type="evidence" value="ECO:0000315"/>
    <property type="project" value="FlyBase"/>
</dbReference>
<dbReference type="GO" id="GO:0008586">
    <property type="term" value="P:imaginal disc-derived wing vein morphogenesis"/>
    <property type="evidence" value="ECO:0000315"/>
    <property type="project" value="FlyBase"/>
</dbReference>
<dbReference type="GO" id="GO:0007494">
    <property type="term" value="P:midgut development"/>
    <property type="evidence" value="ECO:0000315"/>
    <property type="project" value="FlyBase"/>
</dbReference>
<dbReference type="GO" id="GO:0045892">
    <property type="term" value="P:negative regulation of DNA-templated transcription"/>
    <property type="evidence" value="ECO:0000314"/>
    <property type="project" value="FlyBase"/>
</dbReference>
<dbReference type="GO" id="GO:0000122">
    <property type="term" value="P:negative regulation of transcription by RNA polymerase II"/>
    <property type="evidence" value="ECO:0000318"/>
    <property type="project" value="GO_Central"/>
</dbReference>
<dbReference type="GO" id="GO:0030182">
    <property type="term" value="P:neuron differentiation"/>
    <property type="evidence" value="ECO:0000318"/>
    <property type="project" value="GO_Central"/>
</dbReference>
<dbReference type="GO" id="GO:0046552">
    <property type="term" value="P:photoreceptor cell fate commitment"/>
    <property type="evidence" value="ECO:0000315"/>
    <property type="project" value="FlyBase"/>
</dbReference>
<dbReference type="GO" id="GO:0007458">
    <property type="term" value="P:progression of morphogenetic furrow involved in compound eye morphogenesis"/>
    <property type="evidence" value="ECO:0000315"/>
    <property type="project" value="FlyBase"/>
</dbReference>
<dbReference type="GO" id="GO:0048056">
    <property type="term" value="P:R3/R4 cell differentiation"/>
    <property type="evidence" value="ECO:0000315"/>
    <property type="project" value="FlyBase"/>
</dbReference>
<dbReference type="GO" id="GO:0045466">
    <property type="term" value="P:R7 cell differentiation"/>
    <property type="evidence" value="ECO:0000315"/>
    <property type="project" value="FlyBase"/>
</dbReference>
<dbReference type="GO" id="GO:0007530">
    <property type="term" value="P:sex determination"/>
    <property type="evidence" value="ECO:0000316"/>
    <property type="project" value="FlyBase"/>
</dbReference>
<dbReference type="CDD" id="cd19695">
    <property type="entry name" value="bHLH_dnHLH_EMC_like"/>
    <property type="match status" value="1"/>
</dbReference>
<dbReference type="FunFam" id="4.10.280.10:FF:000086">
    <property type="entry name" value="protein extra-macrochaetae"/>
    <property type="match status" value="1"/>
</dbReference>
<dbReference type="Gene3D" id="4.10.280.10">
    <property type="entry name" value="Helix-loop-helix DNA-binding domain"/>
    <property type="match status" value="1"/>
</dbReference>
<dbReference type="InterPro" id="IPR011598">
    <property type="entry name" value="bHLH_dom"/>
</dbReference>
<dbReference type="InterPro" id="IPR026052">
    <property type="entry name" value="DNA-bd_prot-inh"/>
</dbReference>
<dbReference type="InterPro" id="IPR036638">
    <property type="entry name" value="HLH_DNA-bd_sf"/>
</dbReference>
<dbReference type="PANTHER" id="PTHR11723">
    <property type="entry name" value="DNA-BINDING PROTEIN INHIBITOR"/>
    <property type="match status" value="1"/>
</dbReference>
<dbReference type="PANTHER" id="PTHR11723:SF17">
    <property type="entry name" value="PROTEIN EXTRA-MACROCHAETAE"/>
    <property type="match status" value="1"/>
</dbReference>
<dbReference type="Pfam" id="PF00010">
    <property type="entry name" value="HLH"/>
    <property type="match status" value="1"/>
</dbReference>
<dbReference type="SMART" id="SM00353">
    <property type="entry name" value="HLH"/>
    <property type="match status" value="1"/>
</dbReference>
<dbReference type="SUPFAM" id="SSF47459">
    <property type="entry name" value="HLH, helix-loop-helix DNA-binding domain"/>
    <property type="match status" value="1"/>
</dbReference>
<dbReference type="PROSITE" id="PS50888">
    <property type="entry name" value="BHLH"/>
    <property type="match status" value="1"/>
</dbReference>
<keyword id="KW-0539">Nucleus</keyword>
<keyword id="KW-0597">Phosphoprotein</keyword>
<keyword id="KW-1185">Reference proteome</keyword>
<keyword id="KW-0678">Repressor</keyword>
<keyword id="KW-0804">Transcription</keyword>
<keyword id="KW-0805">Transcription regulation</keyword>
<gene>
    <name type="primary">emc</name>
    <name type="ORF">CG1007</name>
</gene>
<organism>
    <name type="scientific">Drosophila melanogaster</name>
    <name type="common">Fruit fly</name>
    <dbReference type="NCBI Taxonomy" id="7227"/>
    <lineage>
        <taxon>Eukaryota</taxon>
        <taxon>Metazoa</taxon>
        <taxon>Ecdysozoa</taxon>
        <taxon>Arthropoda</taxon>
        <taxon>Hexapoda</taxon>
        <taxon>Insecta</taxon>
        <taxon>Pterygota</taxon>
        <taxon>Neoptera</taxon>
        <taxon>Endopterygota</taxon>
        <taxon>Diptera</taxon>
        <taxon>Brachycera</taxon>
        <taxon>Muscomorpha</taxon>
        <taxon>Ephydroidea</taxon>
        <taxon>Drosophilidae</taxon>
        <taxon>Drosophila</taxon>
        <taxon>Sophophora</taxon>
    </lineage>
</organism>
<reference key="1">
    <citation type="journal article" date="1990" name="Cell">
        <title>The Drosophila extramacrochaetae locus, an antagonist of proneural genes that, like these genes, encodes a helix-loop-helix protein.</title>
        <authorList>
            <person name="Garrell J."/>
            <person name="Modolell J."/>
        </authorList>
    </citation>
    <scope>NUCLEOTIDE SEQUENCE [GENOMIC DNA / MRNA]</scope>
</reference>
<reference key="2">
    <citation type="journal article" date="1990" name="Cell">
        <title>Extramacrochaetae, a negative regulator of sensory organ development in Drosophila, defines a new class of helix-loop-helix proteins.</title>
        <authorList>
            <person name="Ellis H.M."/>
            <person name="Spann D.R."/>
            <person name="Posakony J.W."/>
        </authorList>
    </citation>
    <scope>NUCLEOTIDE SEQUENCE [GENOMIC DNA]</scope>
</reference>
<reference key="3">
    <citation type="journal article" date="2000" name="Science">
        <title>The genome sequence of Drosophila melanogaster.</title>
        <authorList>
            <person name="Adams M.D."/>
            <person name="Celniker S.E."/>
            <person name="Holt R.A."/>
            <person name="Evans C.A."/>
            <person name="Gocayne J.D."/>
            <person name="Amanatides P.G."/>
            <person name="Scherer S.E."/>
            <person name="Li P.W."/>
            <person name="Hoskins R.A."/>
            <person name="Galle R.F."/>
            <person name="George R.A."/>
            <person name="Lewis S.E."/>
            <person name="Richards S."/>
            <person name="Ashburner M."/>
            <person name="Henderson S.N."/>
            <person name="Sutton G.G."/>
            <person name="Wortman J.R."/>
            <person name="Yandell M.D."/>
            <person name="Zhang Q."/>
            <person name="Chen L.X."/>
            <person name="Brandon R.C."/>
            <person name="Rogers Y.-H.C."/>
            <person name="Blazej R.G."/>
            <person name="Champe M."/>
            <person name="Pfeiffer B.D."/>
            <person name="Wan K.H."/>
            <person name="Doyle C."/>
            <person name="Baxter E.G."/>
            <person name="Helt G."/>
            <person name="Nelson C.R."/>
            <person name="Miklos G.L.G."/>
            <person name="Abril J.F."/>
            <person name="Agbayani A."/>
            <person name="An H.-J."/>
            <person name="Andrews-Pfannkoch C."/>
            <person name="Baldwin D."/>
            <person name="Ballew R.M."/>
            <person name="Basu A."/>
            <person name="Baxendale J."/>
            <person name="Bayraktaroglu L."/>
            <person name="Beasley E.M."/>
            <person name="Beeson K.Y."/>
            <person name="Benos P.V."/>
            <person name="Berman B.P."/>
            <person name="Bhandari D."/>
            <person name="Bolshakov S."/>
            <person name="Borkova D."/>
            <person name="Botchan M.R."/>
            <person name="Bouck J."/>
            <person name="Brokstein P."/>
            <person name="Brottier P."/>
            <person name="Burtis K.C."/>
            <person name="Busam D.A."/>
            <person name="Butler H."/>
            <person name="Cadieu E."/>
            <person name="Center A."/>
            <person name="Chandra I."/>
            <person name="Cherry J.M."/>
            <person name="Cawley S."/>
            <person name="Dahlke C."/>
            <person name="Davenport L.B."/>
            <person name="Davies P."/>
            <person name="de Pablos B."/>
            <person name="Delcher A."/>
            <person name="Deng Z."/>
            <person name="Mays A.D."/>
            <person name="Dew I."/>
            <person name="Dietz S.M."/>
            <person name="Dodson K."/>
            <person name="Doup L.E."/>
            <person name="Downes M."/>
            <person name="Dugan-Rocha S."/>
            <person name="Dunkov B.C."/>
            <person name="Dunn P."/>
            <person name="Durbin K.J."/>
            <person name="Evangelista C.C."/>
            <person name="Ferraz C."/>
            <person name="Ferriera S."/>
            <person name="Fleischmann W."/>
            <person name="Fosler C."/>
            <person name="Gabrielian A.E."/>
            <person name="Garg N.S."/>
            <person name="Gelbart W.M."/>
            <person name="Glasser K."/>
            <person name="Glodek A."/>
            <person name="Gong F."/>
            <person name="Gorrell J.H."/>
            <person name="Gu Z."/>
            <person name="Guan P."/>
            <person name="Harris M."/>
            <person name="Harris N.L."/>
            <person name="Harvey D.A."/>
            <person name="Heiman T.J."/>
            <person name="Hernandez J.R."/>
            <person name="Houck J."/>
            <person name="Hostin D."/>
            <person name="Houston K.A."/>
            <person name="Howland T.J."/>
            <person name="Wei M.-H."/>
            <person name="Ibegwam C."/>
            <person name="Jalali M."/>
            <person name="Kalush F."/>
            <person name="Karpen G.H."/>
            <person name="Ke Z."/>
            <person name="Kennison J.A."/>
            <person name="Ketchum K.A."/>
            <person name="Kimmel B.E."/>
            <person name="Kodira C.D."/>
            <person name="Kraft C.L."/>
            <person name="Kravitz S."/>
            <person name="Kulp D."/>
            <person name="Lai Z."/>
            <person name="Lasko P."/>
            <person name="Lei Y."/>
            <person name="Levitsky A.A."/>
            <person name="Li J.H."/>
            <person name="Li Z."/>
            <person name="Liang Y."/>
            <person name="Lin X."/>
            <person name="Liu X."/>
            <person name="Mattei B."/>
            <person name="McIntosh T.C."/>
            <person name="McLeod M.P."/>
            <person name="McPherson D."/>
            <person name="Merkulov G."/>
            <person name="Milshina N.V."/>
            <person name="Mobarry C."/>
            <person name="Morris J."/>
            <person name="Moshrefi A."/>
            <person name="Mount S.M."/>
            <person name="Moy M."/>
            <person name="Murphy B."/>
            <person name="Murphy L."/>
            <person name="Muzny D.M."/>
            <person name="Nelson D.L."/>
            <person name="Nelson D.R."/>
            <person name="Nelson K.A."/>
            <person name="Nixon K."/>
            <person name="Nusskern D.R."/>
            <person name="Pacleb J.M."/>
            <person name="Palazzolo M."/>
            <person name="Pittman G.S."/>
            <person name="Pan S."/>
            <person name="Pollard J."/>
            <person name="Puri V."/>
            <person name="Reese M.G."/>
            <person name="Reinert K."/>
            <person name="Remington K."/>
            <person name="Saunders R.D.C."/>
            <person name="Scheeler F."/>
            <person name="Shen H."/>
            <person name="Shue B.C."/>
            <person name="Siden-Kiamos I."/>
            <person name="Simpson M."/>
            <person name="Skupski M.P."/>
            <person name="Smith T.J."/>
            <person name="Spier E."/>
            <person name="Spradling A.C."/>
            <person name="Stapleton M."/>
            <person name="Strong R."/>
            <person name="Sun E."/>
            <person name="Svirskas R."/>
            <person name="Tector C."/>
            <person name="Turner R."/>
            <person name="Venter E."/>
            <person name="Wang A.H."/>
            <person name="Wang X."/>
            <person name="Wang Z.-Y."/>
            <person name="Wassarman D.A."/>
            <person name="Weinstock G.M."/>
            <person name="Weissenbach J."/>
            <person name="Williams S.M."/>
            <person name="Woodage T."/>
            <person name="Worley K.C."/>
            <person name="Wu D."/>
            <person name="Yang S."/>
            <person name="Yao Q.A."/>
            <person name="Ye J."/>
            <person name="Yeh R.-F."/>
            <person name="Zaveri J.S."/>
            <person name="Zhan M."/>
            <person name="Zhang G."/>
            <person name="Zhao Q."/>
            <person name="Zheng L."/>
            <person name="Zheng X.H."/>
            <person name="Zhong F.N."/>
            <person name="Zhong W."/>
            <person name="Zhou X."/>
            <person name="Zhu S.C."/>
            <person name="Zhu X."/>
            <person name="Smith H.O."/>
            <person name="Gibbs R.A."/>
            <person name="Myers E.W."/>
            <person name="Rubin G.M."/>
            <person name="Venter J.C."/>
        </authorList>
    </citation>
    <scope>NUCLEOTIDE SEQUENCE [LARGE SCALE GENOMIC DNA]</scope>
    <source>
        <strain>Berkeley</strain>
    </source>
</reference>
<reference key="4">
    <citation type="journal article" date="2002" name="Genome Biol.">
        <title>Annotation of the Drosophila melanogaster euchromatic genome: a systematic review.</title>
        <authorList>
            <person name="Misra S."/>
            <person name="Crosby M.A."/>
            <person name="Mungall C.J."/>
            <person name="Matthews B.B."/>
            <person name="Campbell K.S."/>
            <person name="Hradecky P."/>
            <person name="Huang Y."/>
            <person name="Kaminker J.S."/>
            <person name="Millburn G.H."/>
            <person name="Prochnik S.E."/>
            <person name="Smith C.D."/>
            <person name="Tupy J.L."/>
            <person name="Whitfield E.J."/>
            <person name="Bayraktaroglu L."/>
            <person name="Berman B.P."/>
            <person name="Bettencourt B.R."/>
            <person name="Celniker S.E."/>
            <person name="de Grey A.D.N.J."/>
            <person name="Drysdale R.A."/>
            <person name="Harris N.L."/>
            <person name="Richter J."/>
            <person name="Russo S."/>
            <person name="Schroeder A.J."/>
            <person name="Shu S.Q."/>
            <person name="Stapleton M."/>
            <person name="Yamada C."/>
            <person name="Ashburner M."/>
            <person name="Gelbart W.M."/>
            <person name="Rubin G.M."/>
            <person name="Lewis S.E."/>
        </authorList>
    </citation>
    <scope>GENOME REANNOTATION</scope>
    <source>
        <strain>Berkeley</strain>
    </source>
</reference>
<reference key="5">
    <citation type="journal article" date="2002" name="Genome Biol.">
        <title>A Drosophila full-length cDNA resource.</title>
        <authorList>
            <person name="Stapleton M."/>
            <person name="Carlson J.W."/>
            <person name="Brokstein P."/>
            <person name="Yu C."/>
            <person name="Champe M."/>
            <person name="George R.A."/>
            <person name="Guarin H."/>
            <person name="Kronmiller B."/>
            <person name="Pacleb J.M."/>
            <person name="Park S."/>
            <person name="Wan K.H."/>
            <person name="Rubin G.M."/>
            <person name="Celniker S.E."/>
        </authorList>
    </citation>
    <scope>NUCLEOTIDE SEQUENCE [LARGE SCALE MRNA]</scope>
    <source>
        <strain>Berkeley</strain>
        <tissue>Embryo</tissue>
    </source>
</reference>
<proteinExistence type="evidence at protein level"/>